<dbReference type="EC" id="2.4.99.17" evidence="1"/>
<dbReference type="EMBL" id="CP000538">
    <property type="protein sequence ID" value="EAQ72973.1"/>
    <property type="molecule type" value="Genomic_DNA"/>
</dbReference>
<dbReference type="RefSeq" id="WP_002854771.1">
    <property type="nucleotide sequence ID" value="NC_008787.1"/>
</dbReference>
<dbReference type="SMR" id="A1VYT7"/>
<dbReference type="KEGG" id="cjj:CJJ81176_0605"/>
<dbReference type="eggNOG" id="COG0809">
    <property type="taxonomic scope" value="Bacteria"/>
</dbReference>
<dbReference type="HOGENOM" id="CLU_039110_1_0_7"/>
<dbReference type="UniPathway" id="UPA00392"/>
<dbReference type="Proteomes" id="UP000000646">
    <property type="component" value="Chromosome"/>
</dbReference>
<dbReference type="GO" id="GO:0005737">
    <property type="term" value="C:cytoplasm"/>
    <property type="evidence" value="ECO:0007669"/>
    <property type="project" value="UniProtKB-SubCell"/>
</dbReference>
<dbReference type="GO" id="GO:0051075">
    <property type="term" value="F:S-adenosylmethionine:tRNA ribosyltransferase-isomerase activity"/>
    <property type="evidence" value="ECO:0007669"/>
    <property type="project" value="UniProtKB-EC"/>
</dbReference>
<dbReference type="GO" id="GO:0008616">
    <property type="term" value="P:queuosine biosynthetic process"/>
    <property type="evidence" value="ECO:0007669"/>
    <property type="project" value="UniProtKB-UniRule"/>
</dbReference>
<dbReference type="GO" id="GO:0002099">
    <property type="term" value="P:tRNA wobble guanine modification"/>
    <property type="evidence" value="ECO:0007669"/>
    <property type="project" value="TreeGrafter"/>
</dbReference>
<dbReference type="Gene3D" id="2.40.10.240">
    <property type="entry name" value="QueA-like"/>
    <property type="match status" value="1"/>
</dbReference>
<dbReference type="Gene3D" id="3.40.1780.10">
    <property type="entry name" value="QueA-like"/>
    <property type="match status" value="1"/>
</dbReference>
<dbReference type="HAMAP" id="MF_00113">
    <property type="entry name" value="QueA"/>
    <property type="match status" value="1"/>
</dbReference>
<dbReference type="InterPro" id="IPR003699">
    <property type="entry name" value="QueA"/>
</dbReference>
<dbReference type="InterPro" id="IPR042118">
    <property type="entry name" value="QueA_dom1"/>
</dbReference>
<dbReference type="InterPro" id="IPR042119">
    <property type="entry name" value="QueA_dom2"/>
</dbReference>
<dbReference type="InterPro" id="IPR036100">
    <property type="entry name" value="QueA_sf"/>
</dbReference>
<dbReference type="NCBIfam" id="NF001140">
    <property type="entry name" value="PRK00147.1"/>
    <property type="match status" value="1"/>
</dbReference>
<dbReference type="NCBIfam" id="TIGR00113">
    <property type="entry name" value="queA"/>
    <property type="match status" value="1"/>
</dbReference>
<dbReference type="PANTHER" id="PTHR30307">
    <property type="entry name" value="S-ADENOSYLMETHIONINE:TRNA RIBOSYLTRANSFERASE-ISOMERASE"/>
    <property type="match status" value="1"/>
</dbReference>
<dbReference type="PANTHER" id="PTHR30307:SF0">
    <property type="entry name" value="S-ADENOSYLMETHIONINE:TRNA RIBOSYLTRANSFERASE-ISOMERASE"/>
    <property type="match status" value="1"/>
</dbReference>
<dbReference type="Pfam" id="PF02547">
    <property type="entry name" value="Queuosine_synth"/>
    <property type="match status" value="1"/>
</dbReference>
<dbReference type="SUPFAM" id="SSF111337">
    <property type="entry name" value="QueA-like"/>
    <property type="match status" value="1"/>
</dbReference>
<organism>
    <name type="scientific">Campylobacter jejuni subsp. jejuni serotype O:23/36 (strain 81-176)</name>
    <dbReference type="NCBI Taxonomy" id="354242"/>
    <lineage>
        <taxon>Bacteria</taxon>
        <taxon>Pseudomonadati</taxon>
        <taxon>Campylobacterota</taxon>
        <taxon>Epsilonproteobacteria</taxon>
        <taxon>Campylobacterales</taxon>
        <taxon>Campylobacteraceae</taxon>
        <taxon>Campylobacter</taxon>
    </lineage>
</organism>
<sequence length="342" mass="39502">MNKDLLLSSYDYTLANELIANYPANPKEDARLLVFDRKNKEIFHTTFKNLKDFLPDCAIFFNDTKVIKARIYGNKASGGKIELFLHQPFLNSHNPLFLAQIKGRVKKDEILYFKEDLKARVVELLDDGLRKVQFFQNDKTLDTSNLYNLLDKIGHIPLPPYIKREDEKSDLKDYQSIFAKNLGAVAAPTASLHFSETMFENLRKKHKIYHLTLHVGAGTFKGVECENIQEHKMHSEFFNIPQQACEIIDSKQAILGVGTTVTRTIEYYARTKTKSGFCDLFLHPQNPPIRQNHLLTNFHLPKSTLIMLVSAFIGREQCLKLYKLAIKEKYRFYSYGDAMLIL</sequence>
<feature type="chain" id="PRO_1000094760" description="S-adenosylmethionine:tRNA ribosyltransferase-isomerase">
    <location>
        <begin position="1"/>
        <end position="342"/>
    </location>
</feature>
<reference key="1">
    <citation type="submission" date="2006-12" db="EMBL/GenBank/DDBJ databases">
        <authorList>
            <person name="Fouts D.E."/>
            <person name="Nelson K.E."/>
            <person name="Sebastian Y."/>
        </authorList>
    </citation>
    <scope>NUCLEOTIDE SEQUENCE [LARGE SCALE GENOMIC DNA]</scope>
    <source>
        <strain>81-176</strain>
    </source>
</reference>
<accession>A1VYT7</accession>
<proteinExistence type="inferred from homology"/>
<gene>
    <name evidence="1" type="primary">queA</name>
    <name type="ordered locus">CJJ81176_0605</name>
</gene>
<name>QUEA_CAMJJ</name>
<protein>
    <recommendedName>
        <fullName evidence="1">S-adenosylmethionine:tRNA ribosyltransferase-isomerase</fullName>
        <ecNumber evidence="1">2.4.99.17</ecNumber>
    </recommendedName>
    <alternativeName>
        <fullName evidence="1">Queuosine biosynthesis protein QueA</fullName>
    </alternativeName>
</protein>
<keyword id="KW-0963">Cytoplasm</keyword>
<keyword id="KW-0671">Queuosine biosynthesis</keyword>
<keyword id="KW-0949">S-adenosyl-L-methionine</keyword>
<keyword id="KW-0808">Transferase</keyword>
<evidence type="ECO:0000255" key="1">
    <source>
        <dbReference type="HAMAP-Rule" id="MF_00113"/>
    </source>
</evidence>
<comment type="function">
    <text evidence="1">Transfers and isomerizes the ribose moiety from AdoMet to the 7-aminomethyl group of 7-deazaguanine (preQ1-tRNA) to give epoxyqueuosine (oQ-tRNA).</text>
</comment>
<comment type="catalytic activity">
    <reaction evidence="1">
        <text>7-aminomethyl-7-carbaguanosine(34) in tRNA + S-adenosyl-L-methionine = epoxyqueuosine(34) in tRNA + adenine + L-methionine + 2 H(+)</text>
        <dbReference type="Rhea" id="RHEA:32155"/>
        <dbReference type="Rhea" id="RHEA-COMP:10342"/>
        <dbReference type="Rhea" id="RHEA-COMP:18582"/>
        <dbReference type="ChEBI" id="CHEBI:15378"/>
        <dbReference type="ChEBI" id="CHEBI:16708"/>
        <dbReference type="ChEBI" id="CHEBI:57844"/>
        <dbReference type="ChEBI" id="CHEBI:59789"/>
        <dbReference type="ChEBI" id="CHEBI:82833"/>
        <dbReference type="ChEBI" id="CHEBI:194443"/>
        <dbReference type="EC" id="2.4.99.17"/>
    </reaction>
</comment>
<comment type="pathway">
    <text evidence="1">tRNA modification; tRNA-queuosine biosynthesis.</text>
</comment>
<comment type="subunit">
    <text evidence="1">Monomer.</text>
</comment>
<comment type="subcellular location">
    <subcellularLocation>
        <location evidence="1">Cytoplasm</location>
    </subcellularLocation>
</comment>
<comment type="similarity">
    <text evidence="1">Belongs to the QueA family.</text>
</comment>